<sequence>MAEQNCEIAWFSALCDDDYEFLGVPDKYLQSSWEHCRNIVLRAEEGGFDNILLPSGYQLGLDTTAFAAAVATQVRRIKLLWATRMGEDWPPQLARRIATLDRILGPNAEGTGGRLNVNIISSDMPGETIASGPRYARATEIMKIVRTLLNGEHLDFQGEFYKLKLDPPRIGTISGRCPAFYFGGLSHDARECAAEASDVYLMWPDTMDKVRETIADMKARAANYGRTLRFGYRVHVVVRETEDEARAYADRLLSKLDDEAGKAIREKSLDAKNFGVQRQQELRGAADGDGFVEENLWTGIGRARSGCGAAIVGTPDQVLAKLRAYQAEGIEAFILSGYPHAQEADMFARYVLPHINHGPLNI</sequence>
<accession>Q2G5J4</accession>
<gene>
    <name evidence="2" type="primary">squD</name>
    <name evidence="4" type="ordered locus">Saro_2443</name>
</gene>
<comment type="function">
    <text evidence="1">Part of the alkanesulfonate monooxygenase (sulfo-ASMO) pathway, a D-sulfoquinovose degradation pathway that enables the complete utilization of all carbons within sulfoquinovose (SQ) with concomitant production of inorganic sulfite (Ref.2). Catalyzes the oxidative desulfurization of sulfoquinovose to sulfite and 6-dehydro-D-glucose (Ref.2).</text>
</comment>
<comment type="catalytic activity">
    <reaction evidence="1">
        <text>6-sulfo-D-quinovose + FMNH2 + O2 = 6-dehydro-D-glucose + FMN + sulfite + H2O + 2 H(+)</text>
        <dbReference type="Rhea" id="RHEA:70775"/>
        <dbReference type="ChEBI" id="CHEBI:15377"/>
        <dbReference type="ChEBI" id="CHEBI:15378"/>
        <dbReference type="ChEBI" id="CHEBI:15379"/>
        <dbReference type="ChEBI" id="CHEBI:17359"/>
        <dbReference type="ChEBI" id="CHEBI:57618"/>
        <dbReference type="ChEBI" id="CHEBI:58210"/>
        <dbReference type="ChEBI" id="CHEBI:77132"/>
        <dbReference type="ChEBI" id="CHEBI:190013"/>
        <dbReference type="EC" id="1.14.14.181"/>
    </reaction>
    <physiologicalReaction direction="left-to-right" evidence="1">
        <dbReference type="Rhea" id="RHEA:70776"/>
    </physiologicalReaction>
</comment>
<comment type="similarity">
    <text evidence="3">Belongs to the SsuD family.</text>
</comment>
<protein>
    <recommendedName>
        <fullName evidence="2">Sulfoquinovose monooxygenase</fullName>
        <shortName evidence="2">SQ monooxygenase</shortName>
        <ecNumber evidence="1">1.14.14.181</ecNumber>
    </recommendedName>
</protein>
<dbReference type="EC" id="1.14.14.181" evidence="1"/>
<dbReference type="EMBL" id="CP000248">
    <property type="protein sequence ID" value="ABD26879.1"/>
    <property type="molecule type" value="Genomic_DNA"/>
</dbReference>
<dbReference type="RefSeq" id="WP_011446085.1">
    <property type="nucleotide sequence ID" value="NC_007794.1"/>
</dbReference>
<dbReference type="SMR" id="Q2G5J4"/>
<dbReference type="STRING" id="279238.Saro_2443"/>
<dbReference type="KEGG" id="nar:Saro_2443"/>
<dbReference type="eggNOG" id="COG2141">
    <property type="taxonomic scope" value="Bacteria"/>
</dbReference>
<dbReference type="HOGENOM" id="CLU_027853_1_0_5"/>
<dbReference type="Proteomes" id="UP000009134">
    <property type="component" value="Chromosome"/>
</dbReference>
<dbReference type="GO" id="GO:0008726">
    <property type="term" value="F:alkanesulfonate monooxygenase activity"/>
    <property type="evidence" value="ECO:0007669"/>
    <property type="project" value="UniProtKB-EC"/>
</dbReference>
<dbReference type="GO" id="GO:0046306">
    <property type="term" value="P:alkanesulfonate catabolic process"/>
    <property type="evidence" value="ECO:0007669"/>
    <property type="project" value="TreeGrafter"/>
</dbReference>
<dbReference type="CDD" id="cd01094">
    <property type="entry name" value="Alkanesulfonate_monoxygenase"/>
    <property type="match status" value="1"/>
</dbReference>
<dbReference type="Gene3D" id="3.20.20.30">
    <property type="entry name" value="Luciferase-like domain"/>
    <property type="match status" value="1"/>
</dbReference>
<dbReference type="InterPro" id="IPR011251">
    <property type="entry name" value="Luciferase-like_dom"/>
</dbReference>
<dbReference type="InterPro" id="IPR036661">
    <property type="entry name" value="Luciferase-like_sf"/>
</dbReference>
<dbReference type="InterPro" id="IPR050172">
    <property type="entry name" value="SsuD_RutA_monooxygenase"/>
</dbReference>
<dbReference type="PANTHER" id="PTHR42847">
    <property type="entry name" value="ALKANESULFONATE MONOOXYGENASE"/>
    <property type="match status" value="1"/>
</dbReference>
<dbReference type="PANTHER" id="PTHR42847:SF4">
    <property type="entry name" value="ALKANESULFONATE MONOOXYGENASE-RELATED"/>
    <property type="match status" value="1"/>
</dbReference>
<dbReference type="Pfam" id="PF00296">
    <property type="entry name" value="Bac_luciferase"/>
    <property type="match status" value="1"/>
</dbReference>
<dbReference type="SUPFAM" id="SSF51679">
    <property type="entry name" value="Bacterial luciferase-like"/>
    <property type="match status" value="1"/>
</dbReference>
<name>SQMOX_NOVAD</name>
<evidence type="ECO:0000269" key="1">
    <source ref="2"/>
</evidence>
<evidence type="ECO:0000303" key="2">
    <source ref="2"/>
</evidence>
<evidence type="ECO:0000305" key="3"/>
<evidence type="ECO:0000312" key="4">
    <source>
        <dbReference type="EMBL" id="ABD26879.1"/>
    </source>
</evidence>
<keyword id="KW-0119">Carbohydrate metabolism</keyword>
<keyword id="KW-0285">Flavoprotein</keyword>
<keyword id="KW-0288">FMN</keyword>
<keyword id="KW-0503">Monooxygenase</keyword>
<keyword id="KW-0560">Oxidoreductase</keyword>
<keyword id="KW-1185">Reference proteome</keyword>
<organism>
    <name type="scientific">Novosphingobium aromaticivorans (strain ATCC 700278 / DSM 12444 / CCUG 56034 / CIP 105152 / NBRC 16084 / F199)</name>
    <dbReference type="NCBI Taxonomy" id="279238"/>
    <lineage>
        <taxon>Bacteria</taxon>
        <taxon>Pseudomonadati</taxon>
        <taxon>Pseudomonadota</taxon>
        <taxon>Alphaproteobacteria</taxon>
        <taxon>Sphingomonadales</taxon>
        <taxon>Sphingomonadaceae</taxon>
        <taxon>Novosphingobium</taxon>
    </lineage>
</organism>
<reference key="1">
    <citation type="submission" date="2006-01" db="EMBL/GenBank/DDBJ databases">
        <title>Complete sequence of Novosphingobium aromaticivorans DSM 12444.</title>
        <authorList>
            <consortium name="US DOE Joint Genome Institute"/>
            <person name="Copeland A."/>
            <person name="Lucas S."/>
            <person name="Lapidus A."/>
            <person name="Barry K."/>
            <person name="Detter J.C."/>
            <person name="Glavina T."/>
            <person name="Hammon N."/>
            <person name="Israni S."/>
            <person name="Pitluck S."/>
            <person name="Chain P."/>
            <person name="Malfatti S."/>
            <person name="Shin M."/>
            <person name="Vergez L."/>
            <person name="Schmutz J."/>
            <person name="Larimer F."/>
            <person name="Land M."/>
            <person name="Kyrpides N."/>
            <person name="Ivanova N."/>
            <person name="Fredrickson J."/>
            <person name="Balkwill D."/>
            <person name="Romine M.F."/>
            <person name="Richardson P."/>
        </authorList>
    </citation>
    <scope>NUCLEOTIDE SEQUENCE [LARGE SCALE GENOMIC DNA]</scope>
    <source>
        <strain>ATCC 700278 / DSM 12444 / CCUG 56034 / CIP 105152 / NBRC 16084 / F199</strain>
    </source>
</reference>
<reference key="2">
    <citation type="journal article" date="2021" name="ACS Catal.">
        <title>Mechanistically diverse pathways for sulfoquinovose degradation in bacteria.</title>
        <authorList>
            <person name="Liu J."/>
            <person name="Wei Y."/>
            <person name="Ma K."/>
            <person name="An J."/>
            <person name="Liu X."/>
            <person name="Liu Y."/>
            <person name="Ang E.L."/>
            <person name="Zhao H."/>
            <person name="Zhang Y."/>
        </authorList>
    </citation>
    <scope>FUNCTION</scope>
    <scope>CATALYTIC ACTIVITY</scope>
    <source>
        <strain>ATCC 700278 / DSM 12444 / CCUG 56034 / CIP 105152 / NBRC 16084 / F199</strain>
    </source>
</reference>
<feature type="chain" id="PRO_0000458916" description="Sulfoquinovose monooxygenase">
    <location>
        <begin position="1"/>
        <end position="362"/>
    </location>
</feature>
<proteinExistence type="evidence at protein level"/>